<organism>
    <name type="scientific">Rhodopseudomonas palustris (strain TIE-1)</name>
    <dbReference type="NCBI Taxonomy" id="395960"/>
    <lineage>
        <taxon>Bacteria</taxon>
        <taxon>Pseudomonadati</taxon>
        <taxon>Pseudomonadota</taxon>
        <taxon>Alphaproteobacteria</taxon>
        <taxon>Hyphomicrobiales</taxon>
        <taxon>Nitrobacteraceae</taxon>
        <taxon>Rhodopseudomonas</taxon>
    </lineage>
</organism>
<dbReference type="EC" id="1.5.1.5" evidence="1"/>
<dbReference type="EC" id="3.5.4.9" evidence="1"/>
<dbReference type="EMBL" id="CP001096">
    <property type="protein sequence ID" value="ACE98977.1"/>
    <property type="molecule type" value="Genomic_DNA"/>
</dbReference>
<dbReference type="RefSeq" id="WP_011155981.1">
    <property type="nucleotide sequence ID" value="NC_011004.1"/>
</dbReference>
<dbReference type="SMR" id="B3QA91"/>
<dbReference type="GeneID" id="66891427"/>
<dbReference type="KEGG" id="rpt:Rpal_0417"/>
<dbReference type="HOGENOM" id="CLU_034045_2_1_5"/>
<dbReference type="OrthoDB" id="9803580at2"/>
<dbReference type="UniPathway" id="UPA00193"/>
<dbReference type="Proteomes" id="UP000001725">
    <property type="component" value="Chromosome"/>
</dbReference>
<dbReference type="GO" id="GO:0005829">
    <property type="term" value="C:cytosol"/>
    <property type="evidence" value="ECO:0007669"/>
    <property type="project" value="TreeGrafter"/>
</dbReference>
<dbReference type="GO" id="GO:0004477">
    <property type="term" value="F:methenyltetrahydrofolate cyclohydrolase activity"/>
    <property type="evidence" value="ECO:0007669"/>
    <property type="project" value="UniProtKB-UniRule"/>
</dbReference>
<dbReference type="GO" id="GO:0004488">
    <property type="term" value="F:methylenetetrahydrofolate dehydrogenase (NADP+) activity"/>
    <property type="evidence" value="ECO:0007669"/>
    <property type="project" value="UniProtKB-UniRule"/>
</dbReference>
<dbReference type="GO" id="GO:0000105">
    <property type="term" value="P:L-histidine biosynthetic process"/>
    <property type="evidence" value="ECO:0007669"/>
    <property type="project" value="UniProtKB-KW"/>
</dbReference>
<dbReference type="GO" id="GO:0009086">
    <property type="term" value="P:methionine biosynthetic process"/>
    <property type="evidence" value="ECO:0007669"/>
    <property type="project" value="UniProtKB-KW"/>
</dbReference>
<dbReference type="GO" id="GO:0006164">
    <property type="term" value="P:purine nucleotide biosynthetic process"/>
    <property type="evidence" value="ECO:0007669"/>
    <property type="project" value="UniProtKB-KW"/>
</dbReference>
<dbReference type="GO" id="GO:0035999">
    <property type="term" value="P:tetrahydrofolate interconversion"/>
    <property type="evidence" value="ECO:0007669"/>
    <property type="project" value="UniProtKB-UniRule"/>
</dbReference>
<dbReference type="CDD" id="cd01080">
    <property type="entry name" value="NAD_bind_m-THF_DH_Cyclohyd"/>
    <property type="match status" value="1"/>
</dbReference>
<dbReference type="FunFam" id="3.40.50.720:FF:000006">
    <property type="entry name" value="Bifunctional protein FolD"/>
    <property type="match status" value="1"/>
</dbReference>
<dbReference type="FunFam" id="3.40.50.10860:FF:000005">
    <property type="entry name" value="C-1-tetrahydrofolate synthase, cytoplasmic, putative"/>
    <property type="match status" value="1"/>
</dbReference>
<dbReference type="Gene3D" id="3.40.50.10860">
    <property type="entry name" value="Leucine Dehydrogenase, chain A, domain 1"/>
    <property type="match status" value="1"/>
</dbReference>
<dbReference type="Gene3D" id="3.40.50.720">
    <property type="entry name" value="NAD(P)-binding Rossmann-like Domain"/>
    <property type="match status" value="1"/>
</dbReference>
<dbReference type="HAMAP" id="MF_01576">
    <property type="entry name" value="THF_DHG_CYH"/>
    <property type="match status" value="1"/>
</dbReference>
<dbReference type="InterPro" id="IPR046346">
    <property type="entry name" value="Aminoacid_DH-like_N_sf"/>
</dbReference>
<dbReference type="InterPro" id="IPR036291">
    <property type="entry name" value="NAD(P)-bd_dom_sf"/>
</dbReference>
<dbReference type="InterPro" id="IPR000672">
    <property type="entry name" value="THF_DH/CycHdrlase"/>
</dbReference>
<dbReference type="InterPro" id="IPR020630">
    <property type="entry name" value="THF_DH/CycHdrlase_cat_dom"/>
</dbReference>
<dbReference type="InterPro" id="IPR020867">
    <property type="entry name" value="THF_DH/CycHdrlase_CS"/>
</dbReference>
<dbReference type="InterPro" id="IPR020631">
    <property type="entry name" value="THF_DH/CycHdrlase_NAD-bd_dom"/>
</dbReference>
<dbReference type="NCBIfam" id="NF010783">
    <property type="entry name" value="PRK14186.1"/>
    <property type="match status" value="1"/>
</dbReference>
<dbReference type="NCBIfam" id="NF010785">
    <property type="entry name" value="PRK14188.1"/>
    <property type="match status" value="1"/>
</dbReference>
<dbReference type="PANTHER" id="PTHR48099:SF5">
    <property type="entry name" value="C-1-TETRAHYDROFOLATE SYNTHASE, CYTOPLASMIC"/>
    <property type="match status" value="1"/>
</dbReference>
<dbReference type="PANTHER" id="PTHR48099">
    <property type="entry name" value="C-1-TETRAHYDROFOLATE SYNTHASE, CYTOPLASMIC-RELATED"/>
    <property type="match status" value="1"/>
</dbReference>
<dbReference type="Pfam" id="PF00763">
    <property type="entry name" value="THF_DHG_CYH"/>
    <property type="match status" value="1"/>
</dbReference>
<dbReference type="Pfam" id="PF02882">
    <property type="entry name" value="THF_DHG_CYH_C"/>
    <property type="match status" value="1"/>
</dbReference>
<dbReference type="PRINTS" id="PR00085">
    <property type="entry name" value="THFDHDRGNASE"/>
</dbReference>
<dbReference type="SUPFAM" id="SSF53223">
    <property type="entry name" value="Aminoacid dehydrogenase-like, N-terminal domain"/>
    <property type="match status" value="1"/>
</dbReference>
<dbReference type="SUPFAM" id="SSF51735">
    <property type="entry name" value="NAD(P)-binding Rossmann-fold domains"/>
    <property type="match status" value="1"/>
</dbReference>
<dbReference type="PROSITE" id="PS00766">
    <property type="entry name" value="THF_DHG_CYH_1"/>
    <property type="match status" value="1"/>
</dbReference>
<proteinExistence type="inferred from homology"/>
<comment type="function">
    <text evidence="1">Catalyzes the oxidation of 5,10-methylenetetrahydrofolate to 5,10-methenyltetrahydrofolate and then the hydrolysis of 5,10-methenyltetrahydrofolate to 10-formyltetrahydrofolate.</text>
</comment>
<comment type="catalytic activity">
    <reaction evidence="1">
        <text>(6R)-5,10-methylene-5,6,7,8-tetrahydrofolate + NADP(+) = (6R)-5,10-methenyltetrahydrofolate + NADPH</text>
        <dbReference type="Rhea" id="RHEA:22812"/>
        <dbReference type="ChEBI" id="CHEBI:15636"/>
        <dbReference type="ChEBI" id="CHEBI:57455"/>
        <dbReference type="ChEBI" id="CHEBI:57783"/>
        <dbReference type="ChEBI" id="CHEBI:58349"/>
        <dbReference type="EC" id="1.5.1.5"/>
    </reaction>
</comment>
<comment type="catalytic activity">
    <reaction evidence="1">
        <text>(6R)-5,10-methenyltetrahydrofolate + H2O = (6R)-10-formyltetrahydrofolate + H(+)</text>
        <dbReference type="Rhea" id="RHEA:23700"/>
        <dbReference type="ChEBI" id="CHEBI:15377"/>
        <dbReference type="ChEBI" id="CHEBI:15378"/>
        <dbReference type="ChEBI" id="CHEBI:57455"/>
        <dbReference type="ChEBI" id="CHEBI:195366"/>
        <dbReference type="EC" id="3.5.4.9"/>
    </reaction>
</comment>
<comment type="pathway">
    <text evidence="1">One-carbon metabolism; tetrahydrofolate interconversion.</text>
</comment>
<comment type="subunit">
    <text evidence="1">Homodimer.</text>
</comment>
<comment type="similarity">
    <text evidence="1">Belongs to the tetrahydrofolate dehydrogenase/cyclohydrolase family.</text>
</comment>
<gene>
    <name evidence="1" type="primary">folD</name>
    <name type="ordered locus">Rpal_0417</name>
</gene>
<protein>
    <recommendedName>
        <fullName evidence="1">Bifunctional protein FolD</fullName>
    </recommendedName>
    <domain>
        <recommendedName>
            <fullName evidence="1">Methylenetetrahydrofolate dehydrogenase</fullName>
            <ecNumber evidence="1">1.5.1.5</ecNumber>
        </recommendedName>
    </domain>
    <domain>
        <recommendedName>
            <fullName evidence="1">Methenyltetrahydrofolate cyclohydrolase</fullName>
            <ecNumber evidence="1">3.5.4.9</ecNumber>
        </recommendedName>
    </domain>
</protein>
<reference key="1">
    <citation type="submission" date="2008-05" db="EMBL/GenBank/DDBJ databases">
        <title>Complete sequence of Rhodopseudomonas palustris TIE-1.</title>
        <authorList>
            <consortium name="US DOE Joint Genome Institute"/>
            <person name="Lucas S."/>
            <person name="Copeland A."/>
            <person name="Lapidus A."/>
            <person name="Glavina del Rio T."/>
            <person name="Dalin E."/>
            <person name="Tice H."/>
            <person name="Pitluck S."/>
            <person name="Chain P."/>
            <person name="Malfatti S."/>
            <person name="Shin M."/>
            <person name="Vergez L."/>
            <person name="Lang D."/>
            <person name="Schmutz J."/>
            <person name="Larimer F."/>
            <person name="Land M."/>
            <person name="Hauser L."/>
            <person name="Kyrpides N."/>
            <person name="Mikhailova N."/>
            <person name="Emerson D."/>
            <person name="Newman D.K."/>
            <person name="Roden E."/>
            <person name="Richardson P."/>
        </authorList>
    </citation>
    <scope>NUCLEOTIDE SEQUENCE [LARGE SCALE GENOMIC DNA]</scope>
    <source>
        <strain>TIE-1</strain>
    </source>
</reference>
<sequence length="295" mass="30537">MTARIIDGKTISAEVRARVAAEVTRLKTDHGITPGLAVVLVGNDPASEVYVRSKHKQTQEAGMASFEHRLPADVPQAELMALIAKLNADPAVHGILVQLPLPKGLDSNAVIDAIDPAKDVDGLNPTNAGRLASGLFALTPCTPLGSIIMAKTVHASLEGMNALVIGRSNLVGKPLVQLLLNENATVTIAHSRTRDLPALCRQADLVFAAVGKAEMVKGDWIKPGATVIDVGINRTPGKDGGKDKLLGDVAFAEAKEVAGAITPVPGGVGLMTVACLLVNTVRAACAIHGLPKPAV</sequence>
<keyword id="KW-0028">Amino-acid biosynthesis</keyword>
<keyword id="KW-0368">Histidine biosynthesis</keyword>
<keyword id="KW-0378">Hydrolase</keyword>
<keyword id="KW-0486">Methionine biosynthesis</keyword>
<keyword id="KW-0511">Multifunctional enzyme</keyword>
<keyword id="KW-0521">NADP</keyword>
<keyword id="KW-0554">One-carbon metabolism</keyword>
<keyword id="KW-0560">Oxidoreductase</keyword>
<keyword id="KW-0658">Purine biosynthesis</keyword>
<evidence type="ECO:0000255" key="1">
    <source>
        <dbReference type="HAMAP-Rule" id="MF_01576"/>
    </source>
</evidence>
<name>FOLD_RHOPT</name>
<accession>B3QA91</accession>
<feature type="chain" id="PRO_1000147515" description="Bifunctional protein FolD">
    <location>
        <begin position="1"/>
        <end position="295"/>
    </location>
</feature>
<feature type="binding site" evidence="1">
    <location>
        <begin position="166"/>
        <end position="168"/>
    </location>
    <ligand>
        <name>NADP(+)</name>
        <dbReference type="ChEBI" id="CHEBI:58349"/>
    </ligand>
</feature>
<feature type="binding site" evidence="1">
    <location>
        <position position="191"/>
    </location>
    <ligand>
        <name>NADP(+)</name>
        <dbReference type="ChEBI" id="CHEBI:58349"/>
    </ligand>
</feature>
<feature type="binding site" evidence="1">
    <location>
        <position position="232"/>
    </location>
    <ligand>
        <name>NADP(+)</name>
        <dbReference type="ChEBI" id="CHEBI:58349"/>
    </ligand>
</feature>